<accession>P94300</accession>
<accession>D3G046</accession>
<evidence type="ECO:0000255" key="1">
    <source>
        <dbReference type="HAMAP-Rule" id="MF_01984"/>
    </source>
</evidence>
<reference key="1">
    <citation type="submission" date="1996-06" db="EMBL/GenBank/DDBJ databases">
        <title>Cloning and sequence of gerC locus from alkaliphilic Bacillus firmus OF4.</title>
        <authorList>
            <person name="Ito M."/>
            <person name="Krulwich T.A."/>
        </authorList>
    </citation>
    <scope>NUCLEOTIDE SEQUENCE [GENOMIC DNA]</scope>
</reference>
<reference key="2">
    <citation type="journal article" date="2011" name="Environ. Microbiol.">
        <title>Genome of alkaliphilic Bacillus pseudofirmus OF4 reveals adaptations that support the ability to grow in an external pH range from 7.5 to 11.4.</title>
        <authorList>
            <person name="Janto B."/>
            <person name="Ahmed A."/>
            <person name="Ito M."/>
            <person name="Liu J."/>
            <person name="Hicks D.B."/>
            <person name="Pagni S."/>
            <person name="Fackelmayer O.J."/>
            <person name="Smith T.A."/>
            <person name="Earl J."/>
            <person name="Elbourne L.D."/>
            <person name="Hassan K."/>
            <person name="Paulsen I.T."/>
            <person name="Kolsto A.B."/>
            <person name="Tourasse N.J."/>
            <person name="Ehrlich G.D."/>
            <person name="Boissy R."/>
            <person name="Ivey D.M."/>
            <person name="Li G."/>
            <person name="Xue Y."/>
            <person name="Ma Y."/>
            <person name="Hu F.Z."/>
            <person name="Krulwich T.A."/>
        </authorList>
    </citation>
    <scope>NUCLEOTIDE SEQUENCE [LARGE SCALE GENOMIC DNA]</scope>
    <source>
        <strain>ATCC BAA-2126 / JCM 17055 / OF4</strain>
    </source>
</reference>
<comment type="function">
    <text evidence="1">Flavin prenyltransferase that catalyzes the synthesis of the prenylated FMN cofactor (prenyl-FMN) for 4-hydroxy-3-polyprenylbenzoic acid decarboxylase UbiD. The prenyltransferase is metal-independent and links a dimethylallyl moiety from dimethylallyl monophosphate (DMAP) to the flavin N5 and C6 atoms of FMN.</text>
</comment>
<comment type="catalytic activity">
    <reaction evidence="1">
        <text>dimethylallyl phosphate + FMNH2 = prenylated FMNH2 + phosphate</text>
        <dbReference type="Rhea" id="RHEA:37743"/>
        <dbReference type="ChEBI" id="CHEBI:43474"/>
        <dbReference type="ChEBI" id="CHEBI:57618"/>
        <dbReference type="ChEBI" id="CHEBI:87467"/>
        <dbReference type="ChEBI" id="CHEBI:88052"/>
        <dbReference type="EC" id="2.5.1.129"/>
    </reaction>
</comment>
<comment type="similarity">
    <text evidence="1">Belongs to the UbiX/PAD1 family.</text>
</comment>
<dbReference type="EC" id="2.5.1.129" evidence="1"/>
<dbReference type="EMBL" id="U61168">
    <property type="protein sequence ID" value="AAB41845.1"/>
    <property type="molecule type" value="Genomic_DNA"/>
</dbReference>
<dbReference type="EMBL" id="CP001878">
    <property type="protein sequence ID" value="ADC51131.1"/>
    <property type="molecule type" value="Genomic_DNA"/>
</dbReference>
<dbReference type="RefSeq" id="WP_012958493.1">
    <property type="nucleotide sequence ID" value="NC_013791.2"/>
</dbReference>
<dbReference type="SMR" id="P94300"/>
<dbReference type="STRING" id="398511.BpOF4_15410"/>
<dbReference type="KEGG" id="bpf:BpOF4_15410"/>
<dbReference type="eggNOG" id="COG0163">
    <property type="taxonomic scope" value="Bacteria"/>
</dbReference>
<dbReference type="HOGENOM" id="CLU_074522_0_1_9"/>
<dbReference type="Proteomes" id="UP000001544">
    <property type="component" value="Chromosome"/>
</dbReference>
<dbReference type="GO" id="GO:0016831">
    <property type="term" value="F:carboxy-lyase activity"/>
    <property type="evidence" value="ECO:0007669"/>
    <property type="project" value="TreeGrafter"/>
</dbReference>
<dbReference type="GO" id="GO:0106141">
    <property type="term" value="F:flavin prenyltransferase activity"/>
    <property type="evidence" value="ECO:0007669"/>
    <property type="project" value="UniProtKB-EC"/>
</dbReference>
<dbReference type="FunFam" id="3.40.50.1950:FF:000001">
    <property type="entry name" value="Flavin prenyltransferase UbiX"/>
    <property type="match status" value="1"/>
</dbReference>
<dbReference type="Gene3D" id="3.40.50.1950">
    <property type="entry name" value="Flavin prenyltransferase-like"/>
    <property type="match status" value="1"/>
</dbReference>
<dbReference type="HAMAP" id="MF_01984">
    <property type="entry name" value="ubiX_pad"/>
    <property type="match status" value="1"/>
</dbReference>
<dbReference type="InterPro" id="IPR036551">
    <property type="entry name" value="Flavin_trans-like"/>
</dbReference>
<dbReference type="InterPro" id="IPR003382">
    <property type="entry name" value="Flavoprotein"/>
</dbReference>
<dbReference type="InterPro" id="IPR004507">
    <property type="entry name" value="UbiX-like"/>
</dbReference>
<dbReference type="NCBIfam" id="NF004685">
    <property type="entry name" value="PRK06029.1"/>
    <property type="match status" value="1"/>
</dbReference>
<dbReference type="NCBIfam" id="TIGR00421">
    <property type="entry name" value="ubiX_pad"/>
    <property type="match status" value="1"/>
</dbReference>
<dbReference type="PANTHER" id="PTHR43374">
    <property type="entry name" value="FLAVIN PRENYLTRANSFERASE"/>
    <property type="match status" value="1"/>
</dbReference>
<dbReference type="PANTHER" id="PTHR43374:SF1">
    <property type="entry name" value="FLAVIN PRENYLTRANSFERASE PAD1, MITOCHONDRIAL"/>
    <property type="match status" value="1"/>
</dbReference>
<dbReference type="Pfam" id="PF02441">
    <property type="entry name" value="Flavoprotein"/>
    <property type="match status" value="1"/>
</dbReference>
<dbReference type="SUPFAM" id="SSF52507">
    <property type="entry name" value="Homo-oligomeric flavin-containing Cys decarboxylases, HFCD"/>
    <property type="match status" value="1"/>
</dbReference>
<organism>
    <name type="scientific">Alkalihalophilus pseudofirmus (strain ATCC BAA-2126 / JCM 17055 / OF4)</name>
    <name type="common">Bacillus pseudofirmus</name>
    <dbReference type="NCBI Taxonomy" id="398511"/>
    <lineage>
        <taxon>Bacteria</taxon>
        <taxon>Bacillati</taxon>
        <taxon>Bacillota</taxon>
        <taxon>Bacilli</taxon>
        <taxon>Bacillales</taxon>
        <taxon>Bacillaceae</taxon>
        <taxon>Alkalihalophilus</taxon>
    </lineage>
</organism>
<name>UBIX_ALKPO</name>
<gene>
    <name evidence="1" type="primary">ubiX</name>
    <name type="ordered locus">BpOF4_15410</name>
</gene>
<feature type="chain" id="PRO_0000134955" description="Flavin prenyltransferase UbiX">
    <location>
        <begin position="1"/>
        <end position="200"/>
    </location>
</feature>
<feature type="binding site" evidence="1">
    <location>
        <begin position="15"/>
        <end position="17"/>
    </location>
    <ligand>
        <name>FMN</name>
        <dbReference type="ChEBI" id="CHEBI:58210"/>
    </ligand>
</feature>
<feature type="binding site" evidence="1">
    <location>
        <position position="41"/>
    </location>
    <ligand>
        <name>FMN</name>
        <dbReference type="ChEBI" id="CHEBI:58210"/>
    </ligand>
</feature>
<feature type="binding site" evidence="1">
    <location>
        <begin position="102"/>
        <end position="105"/>
    </location>
    <ligand>
        <name>FMN</name>
        <dbReference type="ChEBI" id="CHEBI:58210"/>
    </ligand>
</feature>
<feature type="binding site" evidence="1">
    <location>
        <position position="137"/>
    </location>
    <ligand>
        <name>FMN</name>
        <dbReference type="ChEBI" id="CHEBI:58210"/>
    </ligand>
</feature>
<feature type="binding site" evidence="1">
    <location>
        <position position="167"/>
    </location>
    <ligand>
        <name>dimethylallyl phosphate</name>
        <dbReference type="ChEBI" id="CHEBI:88052"/>
    </ligand>
</feature>
<feature type="binding site" evidence="1">
    <location>
        <position position="183"/>
    </location>
    <ligand>
        <name>dimethylallyl phosphate</name>
        <dbReference type="ChEBI" id="CHEBI:88052"/>
    </ligand>
</feature>
<protein>
    <recommendedName>
        <fullName evidence="1">Flavin prenyltransferase UbiX</fullName>
        <ecNumber evidence="1">2.5.1.129</ecNumber>
    </recommendedName>
</protein>
<keyword id="KW-0285">Flavoprotein</keyword>
<keyword id="KW-0288">FMN</keyword>
<keyword id="KW-0637">Prenyltransferase</keyword>
<keyword id="KW-1185">Reference proteome</keyword>
<keyword id="KW-0808">Transferase</keyword>
<proteinExistence type="inferred from homology"/>
<sequence length="200" mass="22233">MSERIEKIMTVGITGASGGMYGVRLTQELLRQEYKVHLVLTEAAWQVFKEELLLDTTDRQKVIHELFGDLPGELHTHDLHDYAAPIASGSYRSAGMVIIPCSMGTLSGMAHGASGNLLERTADVMLKEKRKLVIVPRETPLHDIHLENMLKLSKMGATILPAMPGYYHLPKTIDDLINFLVGKALDSLGVEHTLFTRWGE</sequence>